<reference key="1">
    <citation type="journal article" date="2006" name="J. Bacteriol.">
        <title>Pathogenomic sequence analysis of Bacillus cereus and Bacillus thuringiensis isolates closely related to Bacillus anthracis.</title>
        <authorList>
            <person name="Han C.S."/>
            <person name="Xie G."/>
            <person name="Challacombe J.F."/>
            <person name="Altherr M.R."/>
            <person name="Bhotika S.S."/>
            <person name="Bruce D."/>
            <person name="Campbell C.S."/>
            <person name="Campbell M.L."/>
            <person name="Chen J."/>
            <person name="Chertkov O."/>
            <person name="Cleland C."/>
            <person name="Dimitrijevic M."/>
            <person name="Doggett N.A."/>
            <person name="Fawcett J.J."/>
            <person name="Glavina T."/>
            <person name="Goodwin L.A."/>
            <person name="Hill K.K."/>
            <person name="Hitchcock P."/>
            <person name="Jackson P.J."/>
            <person name="Keim P."/>
            <person name="Kewalramani A.R."/>
            <person name="Longmire J."/>
            <person name="Lucas S."/>
            <person name="Malfatti S."/>
            <person name="McMurry K."/>
            <person name="Meincke L.J."/>
            <person name="Misra M."/>
            <person name="Moseman B.L."/>
            <person name="Mundt M."/>
            <person name="Munk A.C."/>
            <person name="Okinaka R.T."/>
            <person name="Parson-Quintana B."/>
            <person name="Reilly L.P."/>
            <person name="Richardson P."/>
            <person name="Robinson D.L."/>
            <person name="Rubin E."/>
            <person name="Saunders E."/>
            <person name="Tapia R."/>
            <person name="Tesmer J.G."/>
            <person name="Thayer N."/>
            <person name="Thompson L.S."/>
            <person name="Tice H."/>
            <person name="Ticknor L.O."/>
            <person name="Wills P.L."/>
            <person name="Brettin T.S."/>
            <person name="Gilna P."/>
        </authorList>
    </citation>
    <scope>NUCLEOTIDE SEQUENCE [LARGE SCALE GENOMIC DNA]</scope>
    <source>
        <strain>ZK / E33L</strain>
    </source>
</reference>
<evidence type="ECO:0000250" key="1"/>
<evidence type="ECO:0000255" key="2">
    <source>
        <dbReference type="HAMAP-Rule" id="MF_01302"/>
    </source>
</evidence>
<evidence type="ECO:0000305" key="3"/>
<accession>Q63H76</accession>
<dbReference type="EMBL" id="CP000001">
    <property type="protein sequence ID" value="AAU20115.1"/>
    <property type="molecule type" value="Genomic_DNA"/>
</dbReference>
<dbReference type="RefSeq" id="WP_000245511.1">
    <property type="nucleotide sequence ID" value="NZ_CP009968.1"/>
</dbReference>
<dbReference type="SMR" id="Q63H76"/>
<dbReference type="GeneID" id="93010929"/>
<dbReference type="KEGG" id="bcz:BCE33L0118"/>
<dbReference type="PATRIC" id="fig|288681.22.peg.33"/>
<dbReference type="Proteomes" id="UP000002612">
    <property type="component" value="Chromosome"/>
</dbReference>
<dbReference type="GO" id="GO:1990904">
    <property type="term" value="C:ribonucleoprotein complex"/>
    <property type="evidence" value="ECO:0007669"/>
    <property type="project" value="UniProtKB-KW"/>
</dbReference>
<dbReference type="GO" id="GO:0005840">
    <property type="term" value="C:ribosome"/>
    <property type="evidence" value="ECO:0007669"/>
    <property type="project" value="UniProtKB-KW"/>
</dbReference>
<dbReference type="GO" id="GO:0019843">
    <property type="term" value="F:rRNA binding"/>
    <property type="evidence" value="ECO:0007669"/>
    <property type="project" value="UniProtKB-UniRule"/>
</dbReference>
<dbReference type="GO" id="GO:0003735">
    <property type="term" value="F:structural constituent of ribosome"/>
    <property type="evidence" value="ECO:0007669"/>
    <property type="project" value="InterPro"/>
</dbReference>
<dbReference type="GO" id="GO:0006412">
    <property type="term" value="P:translation"/>
    <property type="evidence" value="ECO:0007669"/>
    <property type="project" value="UniProtKB-UniRule"/>
</dbReference>
<dbReference type="FunFam" id="3.30.1370.30:FF:000002">
    <property type="entry name" value="30S ribosomal protein S8"/>
    <property type="match status" value="1"/>
</dbReference>
<dbReference type="FunFam" id="3.30.1490.10:FF:000001">
    <property type="entry name" value="30S ribosomal protein S8"/>
    <property type="match status" value="1"/>
</dbReference>
<dbReference type="Gene3D" id="3.30.1370.30">
    <property type="match status" value="1"/>
</dbReference>
<dbReference type="Gene3D" id="3.30.1490.10">
    <property type="match status" value="1"/>
</dbReference>
<dbReference type="HAMAP" id="MF_01302_B">
    <property type="entry name" value="Ribosomal_uS8_B"/>
    <property type="match status" value="1"/>
</dbReference>
<dbReference type="InterPro" id="IPR000630">
    <property type="entry name" value="Ribosomal_uS8"/>
</dbReference>
<dbReference type="InterPro" id="IPR047863">
    <property type="entry name" value="Ribosomal_uS8_CS"/>
</dbReference>
<dbReference type="InterPro" id="IPR035987">
    <property type="entry name" value="Ribosomal_uS8_sf"/>
</dbReference>
<dbReference type="NCBIfam" id="NF001109">
    <property type="entry name" value="PRK00136.1"/>
    <property type="match status" value="1"/>
</dbReference>
<dbReference type="PANTHER" id="PTHR11758">
    <property type="entry name" value="40S RIBOSOMAL PROTEIN S15A"/>
    <property type="match status" value="1"/>
</dbReference>
<dbReference type="Pfam" id="PF00410">
    <property type="entry name" value="Ribosomal_S8"/>
    <property type="match status" value="1"/>
</dbReference>
<dbReference type="SUPFAM" id="SSF56047">
    <property type="entry name" value="Ribosomal protein S8"/>
    <property type="match status" value="1"/>
</dbReference>
<dbReference type="PROSITE" id="PS00053">
    <property type="entry name" value="RIBOSOMAL_S8"/>
    <property type="match status" value="1"/>
</dbReference>
<keyword id="KW-0687">Ribonucleoprotein</keyword>
<keyword id="KW-0689">Ribosomal protein</keyword>
<keyword id="KW-0694">RNA-binding</keyword>
<keyword id="KW-0699">rRNA-binding</keyword>
<gene>
    <name evidence="2" type="primary">rpsH</name>
    <name type="ordered locus">BCE33L0118</name>
</gene>
<comment type="function">
    <text evidence="2">One of the primary rRNA binding proteins, it binds directly to 16S rRNA central domain where it helps coordinate assembly of the platform of the 30S subunit.</text>
</comment>
<comment type="subunit">
    <text evidence="2">Part of the 30S ribosomal subunit. Contacts proteins S5 and S12.</text>
</comment>
<comment type="similarity">
    <text evidence="2">Belongs to the universal ribosomal protein uS8 family.</text>
</comment>
<sequence>MVMTDPIADMLTRIRNANMVRHEKLEVPASKIKKEIAELLKREGFIRDVEYIEDNKQGILRIFLKYGANNERVITGLKRISKPGLRVYAKADEVPRVLNGLGIALVSTSKGVMTDKDARQLQTGGEVVAYVW</sequence>
<proteinExistence type="inferred from homology"/>
<feature type="initiator methionine" description="Removed" evidence="1">
    <location>
        <position position="1"/>
    </location>
</feature>
<feature type="chain" id="PRO_0000126360" description="Small ribosomal subunit protein uS8">
    <location>
        <begin position="2"/>
        <end position="132"/>
    </location>
</feature>
<name>RS8_BACCZ</name>
<protein>
    <recommendedName>
        <fullName evidence="2">Small ribosomal subunit protein uS8</fullName>
    </recommendedName>
    <alternativeName>
        <fullName evidence="3">30S ribosomal protein S8</fullName>
    </alternativeName>
</protein>
<organism>
    <name type="scientific">Bacillus cereus (strain ZK / E33L)</name>
    <dbReference type="NCBI Taxonomy" id="288681"/>
    <lineage>
        <taxon>Bacteria</taxon>
        <taxon>Bacillati</taxon>
        <taxon>Bacillota</taxon>
        <taxon>Bacilli</taxon>
        <taxon>Bacillales</taxon>
        <taxon>Bacillaceae</taxon>
        <taxon>Bacillus</taxon>
        <taxon>Bacillus cereus group</taxon>
    </lineage>
</organism>